<dbReference type="EC" id="3.6.4.-" evidence="12 13"/>
<dbReference type="EMBL" id="Z75208">
    <property type="protein sequence ID" value="CAA99569.1"/>
    <property type="molecule type" value="Genomic_DNA"/>
</dbReference>
<dbReference type="EMBL" id="AL009126">
    <property type="protein sequence ID" value="CAB14818.1"/>
    <property type="molecule type" value="Genomic_DNA"/>
</dbReference>
<dbReference type="PIR" id="D69985">
    <property type="entry name" value="D69985"/>
</dbReference>
<dbReference type="RefSeq" id="NP_390736.1">
    <property type="nucleotide sequence ID" value="NC_000964.3"/>
</dbReference>
<dbReference type="RefSeq" id="WP_003229541.1">
    <property type="nucleotide sequence ID" value="NZ_OZ025638.1"/>
</dbReference>
<dbReference type="PDB" id="7QV3">
    <property type="method" value="EM"/>
    <property type="resolution" value="5.14 A"/>
    <property type="chains" value="v/w=1-785"/>
</dbReference>
<dbReference type="PDB" id="8QPP">
    <property type="method" value="EM"/>
    <property type="resolution" value="3.40 A"/>
    <property type="chains" value="W=1-785"/>
</dbReference>
<dbReference type="PDB" id="8R55">
    <property type="method" value="EM"/>
    <property type="resolution" value="3.57 A"/>
    <property type="chains" value="z=1-785"/>
</dbReference>
<dbReference type="PDBsum" id="7QV3"/>
<dbReference type="PDBsum" id="8QPP"/>
<dbReference type="PDBsum" id="8R55"/>
<dbReference type="EMDB" id="EMD-14159"/>
<dbReference type="SMR" id="P94545"/>
<dbReference type="FunCoup" id="P94545">
    <property type="interactions" value="149"/>
</dbReference>
<dbReference type="STRING" id="224308.BSU28580"/>
<dbReference type="PaxDb" id="224308-BSU28580"/>
<dbReference type="EnsemblBacteria" id="CAB14818">
    <property type="protein sequence ID" value="CAB14818"/>
    <property type="gene ID" value="BSU_28580"/>
</dbReference>
<dbReference type="GeneID" id="937447"/>
<dbReference type="KEGG" id="bsu:BSU28580"/>
<dbReference type="PATRIC" id="fig|224308.179.peg.3105"/>
<dbReference type="eggNOG" id="COG1193">
    <property type="taxonomic scope" value="Bacteria"/>
</dbReference>
<dbReference type="InParanoid" id="P94545"/>
<dbReference type="OrthoDB" id="9808166at2"/>
<dbReference type="PhylomeDB" id="P94545"/>
<dbReference type="BioCyc" id="BSUB:BSU28580-MONOMER"/>
<dbReference type="Proteomes" id="UP000001570">
    <property type="component" value="Chromosome"/>
</dbReference>
<dbReference type="GO" id="GO:0005737">
    <property type="term" value="C:cytoplasm"/>
    <property type="evidence" value="ECO:0007669"/>
    <property type="project" value="UniProtKB-SubCell"/>
</dbReference>
<dbReference type="GO" id="GO:0005524">
    <property type="term" value="F:ATP binding"/>
    <property type="evidence" value="ECO:0007669"/>
    <property type="project" value="UniProtKB-UniRule"/>
</dbReference>
<dbReference type="GO" id="GO:0016887">
    <property type="term" value="F:ATP hydrolysis activity"/>
    <property type="evidence" value="ECO:0007669"/>
    <property type="project" value="InterPro"/>
</dbReference>
<dbReference type="GO" id="GO:0140664">
    <property type="term" value="F:ATP-dependent DNA damage sensor activity"/>
    <property type="evidence" value="ECO:0007669"/>
    <property type="project" value="InterPro"/>
</dbReference>
<dbReference type="GO" id="GO:0003690">
    <property type="term" value="F:double-stranded DNA binding"/>
    <property type="evidence" value="ECO:0000318"/>
    <property type="project" value="GO_Central"/>
</dbReference>
<dbReference type="GO" id="GO:0030983">
    <property type="term" value="F:mismatched DNA binding"/>
    <property type="evidence" value="ECO:0007669"/>
    <property type="project" value="InterPro"/>
</dbReference>
<dbReference type="GO" id="GO:0043023">
    <property type="term" value="F:ribosomal large subunit binding"/>
    <property type="evidence" value="ECO:0000314"/>
    <property type="project" value="UniProtKB"/>
</dbReference>
<dbReference type="GO" id="GO:0019843">
    <property type="term" value="F:rRNA binding"/>
    <property type="evidence" value="ECO:0000314"/>
    <property type="project" value="UniProtKB"/>
</dbReference>
<dbReference type="GO" id="GO:0006298">
    <property type="term" value="P:mismatch repair"/>
    <property type="evidence" value="ECO:0007669"/>
    <property type="project" value="InterPro"/>
</dbReference>
<dbReference type="GO" id="GO:0045910">
    <property type="term" value="P:negative regulation of DNA recombination"/>
    <property type="evidence" value="ECO:0007669"/>
    <property type="project" value="InterPro"/>
</dbReference>
<dbReference type="GO" id="GO:0072344">
    <property type="term" value="P:rescue of stalled ribosome"/>
    <property type="evidence" value="ECO:0000314"/>
    <property type="project" value="UniProtKB"/>
</dbReference>
<dbReference type="CDD" id="cd03280">
    <property type="entry name" value="ABC_MutS2"/>
    <property type="match status" value="1"/>
</dbReference>
<dbReference type="CDD" id="cd06503">
    <property type="entry name" value="ATP-synt_Fo_b"/>
    <property type="match status" value="1"/>
</dbReference>
<dbReference type="FunFam" id="3.30.1370.110:FF:000013">
    <property type="entry name" value="Endonuclease MutS2"/>
    <property type="match status" value="1"/>
</dbReference>
<dbReference type="FunFam" id="3.40.50.300:FF:000830">
    <property type="entry name" value="Endonuclease MutS2"/>
    <property type="match status" value="1"/>
</dbReference>
<dbReference type="Gene3D" id="3.30.1370.110">
    <property type="match status" value="1"/>
</dbReference>
<dbReference type="Gene3D" id="3.40.50.300">
    <property type="entry name" value="P-loop containing nucleotide triphosphate hydrolases"/>
    <property type="match status" value="1"/>
</dbReference>
<dbReference type="HAMAP" id="MF_00092">
    <property type="entry name" value="MutS2"/>
    <property type="match status" value="1"/>
</dbReference>
<dbReference type="InterPro" id="IPR000432">
    <property type="entry name" value="DNA_mismatch_repair_MutS_C"/>
</dbReference>
<dbReference type="InterPro" id="IPR007696">
    <property type="entry name" value="DNA_mismatch_repair_MutS_core"/>
</dbReference>
<dbReference type="InterPro" id="IPR036187">
    <property type="entry name" value="DNA_mismatch_repair_MutS_sf"/>
</dbReference>
<dbReference type="InterPro" id="IPR046893">
    <property type="entry name" value="MSSS"/>
</dbReference>
<dbReference type="InterPro" id="IPR045076">
    <property type="entry name" value="MutS"/>
</dbReference>
<dbReference type="InterPro" id="IPR005747">
    <property type="entry name" value="MutS2"/>
</dbReference>
<dbReference type="InterPro" id="IPR027417">
    <property type="entry name" value="P-loop_NTPase"/>
</dbReference>
<dbReference type="InterPro" id="IPR002625">
    <property type="entry name" value="Smr_dom"/>
</dbReference>
<dbReference type="InterPro" id="IPR036063">
    <property type="entry name" value="Smr_dom_sf"/>
</dbReference>
<dbReference type="NCBIfam" id="TIGR01069">
    <property type="entry name" value="mutS2"/>
    <property type="match status" value="1"/>
</dbReference>
<dbReference type="PANTHER" id="PTHR48466:SF2">
    <property type="entry name" value="OS10G0509000 PROTEIN"/>
    <property type="match status" value="1"/>
</dbReference>
<dbReference type="PANTHER" id="PTHR48466">
    <property type="entry name" value="OS10G0509000 PROTEIN-RELATED"/>
    <property type="match status" value="1"/>
</dbReference>
<dbReference type="Pfam" id="PF20297">
    <property type="entry name" value="MSSS"/>
    <property type="match status" value="1"/>
</dbReference>
<dbReference type="Pfam" id="PF00488">
    <property type="entry name" value="MutS_V"/>
    <property type="match status" value="1"/>
</dbReference>
<dbReference type="Pfam" id="PF01713">
    <property type="entry name" value="Smr"/>
    <property type="match status" value="1"/>
</dbReference>
<dbReference type="PIRSF" id="PIRSF005814">
    <property type="entry name" value="MutS_YshD"/>
    <property type="match status" value="1"/>
</dbReference>
<dbReference type="SMART" id="SM00534">
    <property type="entry name" value="MUTSac"/>
    <property type="match status" value="1"/>
</dbReference>
<dbReference type="SMART" id="SM00533">
    <property type="entry name" value="MUTSd"/>
    <property type="match status" value="1"/>
</dbReference>
<dbReference type="SMART" id="SM00463">
    <property type="entry name" value="SMR"/>
    <property type="match status" value="1"/>
</dbReference>
<dbReference type="SUPFAM" id="SSF48334">
    <property type="entry name" value="DNA repair protein MutS, domain III"/>
    <property type="match status" value="1"/>
</dbReference>
<dbReference type="SUPFAM" id="SSF52540">
    <property type="entry name" value="P-loop containing nucleoside triphosphate hydrolases"/>
    <property type="match status" value="1"/>
</dbReference>
<dbReference type="SUPFAM" id="SSF160443">
    <property type="entry name" value="SMR domain-like"/>
    <property type="match status" value="1"/>
</dbReference>
<dbReference type="PROSITE" id="PS00486">
    <property type="entry name" value="DNA_MISMATCH_REPAIR_2"/>
    <property type="match status" value="1"/>
</dbReference>
<dbReference type="PROSITE" id="PS50828">
    <property type="entry name" value="SMR"/>
    <property type="match status" value="1"/>
</dbReference>
<reference key="1">
    <citation type="journal article" date="1996" name="Microbiology">
        <title>The dnaB-pheA (256 degrees-240 degrees) region of the Bacillus subtilis chromosome containing genes responsible for stress responses, the utilization of plant cell walls and primary metabolism.</title>
        <authorList>
            <person name="Wipat A."/>
            <person name="Carter N."/>
            <person name="Brignell C.S."/>
            <person name="Guy J.B."/>
            <person name="Piper K."/>
            <person name="Sanders J."/>
            <person name="Emmerson P.T."/>
            <person name="Harwood C.R."/>
        </authorList>
    </citation>
    <scope>NUCLEOTIDE SEQUENCE [GENOMIC DNA]</scope>
    <source>
        <strain>168</strain>
    </source>
</reference>
<reference key="2">
    <citation type="journal article" date="1997" name="Nature">
        <title>The complete genome sequence of the Gram-positive bacterium Bacillus subtilis.</title>
        <authorList>
            <person name="Kunst F."/>
            <person name="Ogasawara N."/>
            <person name="Moszer I."/>
            <person name="Albertini A.M."/>
            <person name="Alloni G."/>
            <person name="Azevedo V."/>
            <person name="Bertero M.G."/>
            <person name="Bessieres P."/>
            <person name="Bolotin A."/>
            <person name="Borchert S."/>
            <person name="Borriss R."/>
            <person name="Boursier L."/>
            <person name="Brans A."/>
            <person name="Braun M."/>
            <person name="Brignell S.C."/>
            <person name="Bron S."/>
            <person name="Brouillet S."/>
            <person name="Bruschi C.V."/>
            <person name="Caldwell B."/>
            <person name="Capuano V."/>
            <person name="Carter N.M."/>
            <person name="Choi S.-K."/>
            <person name="Codani J.-J."/>
            <person name="Connerton I.F."/>
            <person name="Cummings N.J."/>
            <person name="Daniel R.A."/>
            <person name="Denizot F."/>
            <person name="Devine K.M."/>
            <person name="Duesterhoeft A."/>
            <person name="Ehrlich S.D."/>
            <person name="Emmerson P.T."/>
            <person name="Entian K.-D."/>
            <person name="Errington J."/>
            <person name="Fabret C."/>
            <person name="Ferrari E."/>
            <person name="Foulger D."/>
            <person name="Fritz C."/>
            <person name="Fujita M."/>
            <person name="Fujita Y."/>
            <person name="Fuma S."/>
            <person name="Galizzi A."/>
            <person name="Galleron N."/>
            <person name="Ghim S.-Y."/>
            <person name="Glaser P."/>
            <person name="Goffeau A."/>
            <person name="Golightly E.J."/>
            <person name="Grandi G."/>
            <person name="Guiseppi G."/>
            <person name="Guy B.J."/>
            <person name="Haga K."/>
            <person name="Haiech J."/>
            <person name="Harwood C.R."/>
            <person name="Henaut A."/>
            <person name="Hilbert H."/>
            <person name="Holsappel S."/>
            <person name="Hosono S."/>
            <person name="Hullo M.-F."/>
            <person name="Itaya M."/>
            <person name="Jones L.-M."/>
            <person name="Joris B."/>
            <person name="Karamata D."/>
            <person name="Kasahara Y."/>
            <person name="Klaerr-Blanchard M."/>
            <person name="Klein C."/>
            <person name="Kobayashi Y."/>
            <person name="Koetter P."/>
            <person name="Koningstein G."/>
            <person name="Krogh S."/>
            <person name="Kumano M."/>
            <person name="Kurita K."/>
            <person name="Lapidus A."/>
            <person name="Lardinois S."/>
            <person name="Lauber J."/>
            <person name="Lazarevic V."/>
            <person name="Lee S.-M."/>
            <person name="Levine A."/>
            <person name="Liu H."/>
            <person name="Masuda S."/>
            <person name="Mauel C."/>
            <person name="Medigue C."/>
            <person name="Medina N."/>
            <person name="Mellado R.P."/>
            <person name="Mizuno M."/>
            <person name="Moestl D."/>
            <person name="Nakai S."/>
            <person name="Noback M."/>
            <person name="Noone D."/>
            <person name="O'Reilly M."/>
            <person name="Ogawa K."/>
            <person name="Ogiwara A."/>
            <person name="Oudega B."/>
            <person name="Park S.-H."/>
            <person name="Parro V."/>
            <person name="Pohl T.M."/>
            <person name="Portetelle D."/>
            <person name="Porwollik S."/>
            <person name="Prescott A.M."/>
            <person name="Presecan E."/>
            <person name="Pujic P."/>
            <person name="Purnelle B."/>
            <person name="Rapoport G."/>
            <person name="Rey M."/>
            <person name="Reynolds S."/>
            <person name="Rieger M."/>
            <person name="Rivolta C."/>
            <person name="Rocha E."/>
            <person name="Roche B."/>
            <person name="Rose M."/>
            <person name="Sadaie Y."/>
            <person name="Sato T."/>
            <person name="Scanlan E."/>
            <person name="Schleich S."/>
            <person name="Schroeter R."/>
            <person name="Scoffone F."/>
            <person name="Sekiguchi J."/>
            <person name="Sekowska A."/>
            <person name="Seror S.J."/>
            <person name="Serror P."/>
            <person name="Shin B.-S."/>
            <person name="Soldo B."/>
            <person name="Sorokin A."/>
            <person name="Tacconi E."/>
            <person name="Takagi T."/>
            <person name="Takahashi H."/>
            <person name="Takemaru K."/>
            <person name="Takeuchi M."/>
            <person name="Tamakoshi A."/>
            <person name="Tanaka T."/>
            <person name="Terpstra P."/>
            <person name="Tognoni A."/>
            <person name="Tosato V."/>
            <person name="Uchiyama S."/>
            <person name="Vandenbol M."/>
            <person name="Vannier F."/>
            <person name="Vassarotti A."/>
            <person name="Viari A."/>
            <person name="Wambutt R."/>
            <person name="Wedler E."/>
            <person name="Wedler H."/>
            <person name="Weitzenegger T."/>
            <person name="Winters P."/>
            <person name="Wipat A."/>
            <person name="Yamamoto H."/>
            <person name="Yamane K."/>
            <person name="Yasumoto K."/>
            <person name="Yata K."/>
            <person name="Yoshida K."/>
            <person name="Yoshikawa H.-F."/>
            <person name="Zumstein E."/>
            <person name="Yoshikawa H."/>
            <person name="Danchin A."/>
        </authorList>
    </citation>
    <scope>NUCLEOTIDE SEQUENCE [LARGE SCALE GENOMIC DNA]</scope>
    <source>
        <strain>168</strain>
    </source>
</reference>
<reference key="3">
    <citation type="journal article" date="2001" name="Mol. Gen. Genet.">
        <title>Functional analysis of the Bacillus subtilis yshD gene, a mutS paralogue.</title>
        <authorList>
            <person name="Rossolillo P."/>
            <person name="Albertini A.M."/>
        </authorList>
    </citation>
    <scope>NO FUNCTION IN MISMATCH REPAIR</scope>
    <scope>INDUCTION</scope>
    <scope>DISRUPTION PHENOTYPE</scope>
    <source>
        <strain>168</strain>
    </source>
</reference>
<reference key="4">
    <citation type="journal article" date="2017" name="J. Bacteriol.">
        <title>MutS2 Promotes Homologous Recombination in Bacillus subtilis.</title>
        <authorList>
            <person name="Burby P.E."/>
            <person name="Simmons L.A."/>
        </authorList>
    </citation>
    <scope>SUBCELLULAR LOCATION</scope>
    <scope>INDUCTION</scope>
    <scope>DOMAIN</scope>
    <scope>DISRUPTION PHENOTYPE</scope>
    <scope>MUTAGENESIS OF 636-LYS--LYS-785</scope>
</reference>
<reference key="5">
    <citation type="journal article" date="2024" name="EMBO J.">
        <title>B. subtilis MutS2 splits stalled ribosomes into subunits without mRNA cleavage.</title>
        <authorList>
            <person name="Park E.N."/>
            <person name="Mackens-Kiani T."/>
            <person name="Berhane R."/>
            <person name="Esser H."/>
            <person name="Erdenebat C."/>
            <person name="Burroughs A.M."/>
            <person name="Berninghausen O."/>
            <person name="Aravind L."/>
            <person name="Beckmann R."/>
            <person name="Green R."/>
            <person name="Buskirk A.R."/>
        </authorList>
    </citation>
    <scope>FUNCTION</scope>
    <scope>CATALYTIC ACTIVITY</scope>
    <scope>ATPASE ACTIVITY</scope>
    <scope>SUBUNIT</scope>
    <scope>DOMAIN</scope>
    <scope>DISRUPTION PHENOTYPE</scope>
    <scope>MUTAGENESIS OF GLU-416; 668-GLN--LYS-673; 702-LYS--LYS-785; 711-ASP--ARG-713 AND HIS-743</scope>
    <source>
        <strain>168</strain>
    </source>
</reference>
<reference evidence="14" key="6">
    <citation type="journal article" date="2022" name="Nature">
        <title>Bacterial ribosome collision sensing by a MutS DNA repair ATPase paralogue.</title>
        <authorList>
            <person name="Cerullo F."/>
            <person name="Filbeck S."/>
            <person name="Patil P.R."/>
            <person name="Hung H.C."/>
            <person name="Xu H."/>
            <person name="Vornberger J."/>
            <person name="Hofer F.W."/>
            <person name="Schmitt J."/>
            <person name="Kramer G."/>
            <person name="Bukau B."/>
            <person name="Hofmann K."/>
            <person name="Pfeffer S."/>
            <person name="Joazeiro C.A.P."/>
        </authorList>
    </citation>
    <scope>STRUCTURE BY ELECTRON MICROSCOPY (5.14 ANGSTROMS) IN COMPLEX WITH 70S RIBOSOME</scope>
    <scope>FUNCTION</scope>
    <scope>CATALYTIC ACTIVITY</scope>
    <scope>ATPASE ACTIVITY</scope>
    <scope>SUBUNIT</scope>
    <scope>DOMAIN</scope>
    <scope>DISRUPTION PHENOTYPE</scope>
    <scope>MUTAGENESIS OF GLY-340; LYS-341; GLU-416; 702-LYS--LYS-785 AND ASP-711</scope>
    <source>
        <strain>168</strain>
    </source>
</reference>
<protein>
    <recommendedName>
        <fullName evidence="9">Putative endonuclease MutS2</fullName>
    </recommendedName>
    <alternativeName>
        <fullName evidence="6">Ribosome-associated protein quality control-upstream factor</fullName>
        <shortName evidence="6">RQC-upstream factor</shortName>
        <shortName evidence="6">RqcU</shortName>
        <ecNumber evidence="12 13">3.6.4.-</ecNumber>
    </alternativeName>
</protein>
<accession>P94545</accession>
<proteinExistence type="evidence at protein level"/>
<feature type="chain" id="PRO_0000115217" description="Putative endonuclease MutS2">
    <location>
        <begin position="1"/>
        <end position="785"/>
    </location>
</feature>
<feature type="domain" description="Smr" evidence="1">
    <location>
        <begin position="710"/>
        <end position="785"/>
    </location>
</feature>
<feature type="region of interest" description="Partially complements a deletion for mitomycin C (MMC) resistance and for chromosomal DNA transformation" evidence="3">
    <location>
        <begin position="636"/>
        <end position="785"/>
    </location>
</feature>
<feature type="region of interest" description="KOW region" evidence="12 13">
    <location>
        <begin position="641"/>
        <end position="681"/>
    </location>
</feature>
<feature type="coiled-coil region" evidence="12">
    <location>
        <begin position="513"/>
        <end position="586"/>
    </location>
</feature>
<feature type="binding site" evidence="1">
    <location>
        <begin position="335"/>
        <end position="342"/>
    </location>
    <ligand>
        <name>ATP</name>
        <dbReference type="ChEBI" id="CHEBI:30616"/>
    </ligand>
</feature>
<feature type="mutagenesis site" description="Prevents disome splitting." evidence="4">
    <original>G</original>
    <variation>R</variation>
    <location>
        <position position="340"/>
    </location>
</feature>
<feature type="mutagenesis site" description="Probably binds less ATP, more associated with polysomes than disomes or trisomes, does not restore alanine-tailing, does not restore erythromycin sensitivity, outcompeted by wild-type strain in vivo." evidence="4">
    <original>K</original>
    <variation>A</variation>
    <location>
        <position position="341"/>
    </location>
</feature>
<feature type="mutagenesis site" description="Probably decreased ATP hydrolysis, more associated with polysomes than disomes or trisomes, does not restore alanine-tailing, does not restore erythromycin sensitivity, prevents disome splitting." evidence="4 5">
    <original>E</original>
    <variation>A</variation>
    <location>
        <position position="416"/>
    </location>
</feature>
<feature type="mutagenesis site" description="Does not complement sensitivity to MMC, nor chromosomal DNA transformation." evidence="3">
    <location>
        <begin position="636"/>
        <end position="785"/>
    </location>
</feature>
<feature type="mutagenesis site" description="Decreased binding to stalled/collided disomes." evidence="5">
    <original>QIGILK</original>
    <variation>AIGAAA</variation>
    <location>
        <begin position="668"/>
        <end position="673"/>
    </location>
</feature>
<feature type="mutagenesis site" description="Slightly reduced ability to restore erythromycin resistance in vivo, outcompeted by wild-type strain in vivo. Dramatically decreased binding to stalled/collided disomes." evidence="4 5">
    <location>
        <begin position="702"/>
        <end position="785"/>
    </location>
</feature>
<feature type="mutagenesis site" description="Dramatically decreased binding to stalled/collided disomes, no change in disome splitting in vitro." evidence="5">
    <original>DLR</original>
    <variation>ALA</variation>
    <location>
        <begin position="711"/>
        <end position="713"/>
    </location>
</feature>
<feature type="mutagenesis site" description="Slightly reduced ability to restore erythromycin resistance in vivo, outcompeted by wild-type strain in vivo." evidence="4">
    <original>D</original>
    <variation>A</variation>
    <location>
        <position position="711"/>
    </location>
</feature>
<feature type="mutagenesis site" description="Dramatically decreased binding to stalled/collided disomes." evidence="5">
    <original>H</original>
    <variation>A</variation>
    <location>
        <position position="743"/>
    </location>
</feature>
<sequence>MQQKVLSALEFHKVKEQVIGHAASSLGKEMLLELKPSASIDEIKKQLDEVDEASDIIRLRGQAPFGGLVDIRGALRRAEIGSVLSPSEFTEISGLLYAVKQMKHFITQMAEDGVDIPLIHQHAEQLITLSDLERDINSCIDDHGEVLDHASETLRGIRTQLRTLESRVRDRLESMLRSSSASKMLSDTIVTIRNDRFVIPVKQEYRSSYGGIVHDTSSSGATLFIEPQAIVDMNNSLQQAKVKEKQEIERILRVLTEKTAEYTEELFLDLQVLQTLDFIFAKARYAKAVKATKPIMNDTGFIRLKKARHPLLPPDQVVANDIELGRDFSTIVITGPNTGGKTVTLKTLGLLTLMAQSGLHIPADEGSEAAVFEHVFADIGDEQSIEQSLSTFSSHMVNIVGILEQVNENSLVLFDELGAGTDPQEGAALAMSILDDVHRTNARVLATTHYPELKAYGYNREGVMNASVEFDIETLSPTYKLLIGVPGRSNAFEISKRLGLPDHIIGQAKSEMTAEHNEVDTMIASLEQSKKRAEEELSETESIRKEAEKLHKELQQQIIELNSKKDKMLEEAEQQAAEKVKAAMKEAEDIIHELRTIKEEHKSFKDHELINAKKRLEGAMPAFEKSKKPEKPKTQKRDFKPGDEVKVLTFGQKGTLLEKTGGNEWNVQIGILKMKVKEKDLEFIKSAPEPKKEKMITAVKGKDYHVSLELDLRGERYENALSRVEKYLDDAVLAGYPRVSIIHGKGTGALRKGVQDLLKNHRSVKSSRFGEAGEGGSGVTVVELK</sequence>
<keyword id="KW-0002">3D-structure</keyword>
<keyword id="KW-0067">ATP-binding</keyword>
<keyword id="KW-0175">Coiled coil</keyword>
<keyword id="KW-0963">Cytoplasm</keyword>
<keyword id="KW-0238">DNA-binding</keyword>
<keyword id="KW-0378">Hydrolase</keyword>
<keyword id="KW-0547">Nucleotide-binding</keyword>
<keyword id="KW-1185">Reference proteome</keyword>
<keyword id="KW-0694">RNA-binding</keyword>
<keyword id="KW-0699">rRNA-binding</keyword>
<organism>
    <name type="scientific">Bacillus subtilis (strain 168)</name>
    <dbReference type="NCBI Taxonomy" id="224308"/>
    <lineage>
        <taxon>Bacteria</taxon>
        <taxon>Bacillati</taxon>
        <taxon>Bacillota</taxon>
        <taxon>Bacilli</taxon>
        <taxon>Bacillales</taxon>
        <taxon>Bacillaceae</taxon>
        <taxon>Bacillus</taxon>
    </lineage>
</organism>
<comment type="function">
    <text evidence="4 5 12 13">Acts as a ribosome collision sensor splitting the ribosome into its 2 subunits (PubMed:35264791). Detects stalled/collided disomes (pairs of ribosomes where the leading ribosome is stalled and a second ribosome has collided with it) which it binds and splits, by an ATP-hydrolysis driven conformational change (PubMed:35264791, PubMed:38177497). Does not seem to have endoribonuclease activity (in the context of ribosome stalling) (PubMed:38177497). Acts upstream of the ribosome quality control system (RQC), a ribosome-associated complex that mediates the extraction of incompletely synthesized nascent chains from stalled ribosomes and their subsequent degradation, probably generates substrates for RQC (Probable) (PubMed:35264791, PubMed:38177497).</text>
</comment>
<comment type="function">
    <text evidence="1 2 11">Does not seem to be involved in mismatch repair or in the prevention of interspecific recombination during DNA transformation (PubMed:11254128). Might be involved in homologous recombination (Probable) (PubMed:27799325). Putative endonuclease that may be involved in the suppression of homologous recombination and may therefore have a key role in the control of bacterial genetic diversity (By similarity).</text>
</comment>
<comment type="subunit">
    <text evidence="1 4 5">Binds to ribosomes as a homodimer (PubMed:35264791, PubMed:38177497). Binds to stalled/collided disomes, association is greater in (ribosome-targeted) antibiotic-treated cells (with increased stalling at specific mRNA sites) (PubMed:35264791, PubMed:38177497). The clamp domain of one monomer binds the A-site finger, the 23S rRNA of the central protuberance and ribosomal protein uL5 of the leading (stalled) ribosome, while the other monomer binds in a gap between the ribosomal central protuberance and the L1 stalk of the leading ribosome (PubMed:35264791).</text>
</comment>
<comment type="subcellular location">
    <subcellularLocation>
        <location evidence="3">Cytoplasm</location>
    </subcellularLocation>
    <text evidence="3">A GFP-MutS2 fusion protein is diffuse over all the cell, no particular localization is seen (PubMed:27799325).</text>
</comment>
<comment type="induction">
    <text evidence="2 3 10">Constitutively transcribed in rich and minimal media, highest transcripts occur in stationary phase in minimal media (PubMed:11254128). In rich medium protein is expressed at a constant level during all growth stages (at protein level) (PubMed:27799325). Probably part of the polX-mutS2-yshE operon (Probable) (PubMed:11254128).</text>
</comment>
<comment type="domain">
    <text evidence="3 4 5">The KOW and Smr domain are required for mitomycin C resistance (PubMed:27799325). The ATPase and clamp domain (approximately residues 1-586) form a tweezer that holds the lead (stalled) ribosome (PubMed:35264791). The long coiled-coil domain binds along the disome interface, coordinated by interactions with helix 39 of the 16S rRNA of both ribosomes (PubMed:35264791). Deletion of the Smr domain (residues 702-785), which might have nuclease activity, has litle impact on ribosome rescue in vitro, but the strain is less competitive against wild-type in vivo (PubMed:35264791). In another cryo-EM structure only the KOW and Smr regions are visible in association with stalled disomes (PubMed:38177497). In this study the Smr domain interacts with uS7 and uS11 of the leading (stalled) ribosome, with uS3 on the collided ribosome, while the KOW regions contact uS10 in both ribosomal subunits (PubMed:38177497).</text>
</comment>
<comment type="disruption phenotype">
    <text evidence="2 3 4 5">Not essential, it can be deleted (PubMed:11254128, PubMed:27799325, PubMed:35264791, PubMed:38177497). No change in spontaneous mutation rate; does not genetically interact with mutS or mutL (PubMed:11254128, PubMed:27799325). About 10-fold increased sensitivity to mitomycin C (MMC) (PubMed:27799325). Decreased transformation efficiency of both chromosomal (5-fold decrease) and plasmid DNA; a double mutS2-recU deletion strain has a 57-fold decrease in chromosomal DNA transformation efficicency (PubMed:27799325). Hypersensitive to antibiotics that target the ribosome; erythromycin, chloramphencicol and tetracycline, but not to beta-lactam antibiotics (PubMed:38177497, PubMed:35264791). Double mutSB-rqcH, mutSB-ssrA and triple mutSB-rqcH-ssrA deletions are even more sensitive to erythromycin (PubMed:35264791). Decreases alanine-tailing by 80%; Ala-tailing by RqcH (which targets aberrant nascent chains for degradation) requires splitting of the 30S and 50S subunits of stalled ribosomes (PubMed:35264791, PubMed:38177497). Decreased rescue of stalled ribosomes (PubMed:38177497).</text>
</comment>
<comment type="miscellaneous">
    <text>The ssrA gene (for tmRNA) encodes the SsrA tag added to nascent proteins in stalled ribosomes by trans-translation, which targets the nascent protein for degradation.</text>
</comment>
<comment type="similarity">
    <text evidence="1">Belongs to the DNA mismatch repair MutS family. MutS2 subfamily.</text>
</comment>
<evidence type="ECO:0000255" key="1">
    <source>
        <dbReference type="HAMAP-Rule" id="MF_00092"/>
    </source>
</evidence>
<evidence type="ECO:0000269" key="2">
    <source>
    </source>
</evidence>
<evidence type="ECO:0000269" key="3">
    <source>
    </source>
</evidence>
<evidence type="ECO:0000269" key="4">
    <source>
    </source>
</evidence>
<evidence type="ECO:0000269" key="5">
    <source>
    </source>
</evidence>
<evidence type="ECO:0000303" key="6">
    <source>
    </source>
</evidence>
<evidence type="ECO:0000303" key="7">
    <source>
    </source>
</evidence>
<evidence type="ECO:0000303" key="8">
    <source>
    </source>
</evidence>
<evidence type="ECO:0000305" key="9"/>
<evidence type="ECO:0000305" key="10">
    <source>
    </source>
</evidence>
<evidence type="ECO:0000305" key="11">
    <source>
    </source>
</evidence>
<evidence type="ECO:0000305" key="12">
    <source>
    </source>
</evidence>
<evidence type="ECO:0000305" key="13">
    <source>
    </source>
</evidence>
<evidence type="ECO:0007744" key="14">
    <source>
        <dbReference type="PDB" id="7QV3"/>
    </source>
</evidence>
<gene>
    <name evidence="8" type="primary">mutSB</name>
    <name type="synonym">mutS2</name>
    <name evidence="6" type="synonym">rqcU</name>
    <name evidence="7" type="synonym">yshD</name>
    <name type="ordered locus">BSU28580</name>
</gene>
<name>MUTS2_BACSU</name>